<reference key="1">
    <citation type="journal article" date="2009" name="ISME J.">
        <title>The genome sequence of the psychrophilic archaeon, Methanococcoides burtonii: the role of genome evolution in cold adaptation.</title>
        <authorList>
            <person name="Allen M.A."/>
            <person name="Lauro F.M."/>
            <person name="Williams T.J."/>
            <person name="Burg D."/>
            <person name="Siddiqui K.S."/>
            <person name="De Francisci D."/>
            <person name="Chong K.W."/>
            <person name="Pilak O."/>
            <person name="Chew H.H."/>
            <person name="De Maere M.Z."/>
            <person name="Ting L."/>
            <person name="Katrib M."/>
            <person name="Ng C."/>
            <person name="Sowers K.R."/>
            <person name="Galperin M.Y."/>
            <person name="Anderson I.J."/>
            <person name="Ivanova N."/>
            <person name="Dalin E."/>
            <person name="Martinez M."/>
            <person name="Lapidus A."/>
            <person name="Hauser L."/>
            <person name="Land M."/>
            <person name="Thomas T."/>
            <person name="Cavicchioli R."/>
        </authorList>
    </citation>
    <scope>NUCLEOTIDE SEQUENCE [LARGE SCALE GENOMIC DNA]</scope>
    <source>
        <strain>DSM 6242 / NBRC 107633 / OCM 468 / ACE-M</strain>
    </source>
</reference>
<organism>
    <name type="scientific">Methanococcoides burtonii (strain DSM 6242 / NBRC 107633 / OCM 468 / ACE-M)</name>
    <dbReference type="NCBI Taxonomy" id="259564"/>
    <lineage>
        <taxon>Archaea</taxon>
        <taxon>Methanobacteriati</taxon>
        <taxon>Methanobacteriota</taxon>
        <taxon>Stenosarchaea group</taxon>
        <taxon>Methanomicrobia</taxon>
        <taxon>Methanosarcinales</taxon>
        <taxon>Methanosarcinaceae</taxon>
        <taxon>Methanococcoides</taxon>
    </lineage>
</organism>
<accession>Q12UW5</accession>
<evidence type="ECO:0000255" key="1">
    <source>
        <dbReference type="HAMAP-Rule" id="MF_01224"/>
    </source>
</evidence>
<keyword id="KW-0456">Lyase</keyword>
<keyword id="KW-0501">Molybdenum cofactor biosynthesis</keyword>
<dbReference type="EC" id="4.6.1.17" evidence="1"/>
<dbReference type="EMBL" id="CP000300">
    <property type="protein sequence ID" value="ABE52761.1"/>
    <property type="molecule type" value="Genomic_DNA"/>
</dbReference>
<dbReference type="RefSeq" id="WP_011499904.1">
    <property type="nucleotide sequence ID" value="NC_007955.1"/>
</dbReference>
<dbReference type="SMR" id="Q12UW5"/>
<dbReference type="STRING" id="259564.Mbur_1878"/>
<dbReference type="GeneID" id="3997670"/>
<dbReference type="KEGG" id="mbu:Mbur_1878"/>
<dbReference type="HOGENOM" id="CLU_074693_1_2_2"/>
<dbReference type="OrthoDB" id="10067at2157"/>
<dbReference type="UniPathway" id="UPA00344"/>
<dbReference type="Proteomes" id="UP000001979">
    <property type="component" value="Chromosome"/>
</dbReference>
<dbReference type="GO" id="GO:0061799">
    <property type="term" value="F:cyclic pyranopterin monophosphate synthase activity"/>
    <property type="evidence" value="ECO:0007669"/>
    <property type="project" value="UniProtKB-UniRule"/>
</dbReference>
<dbReference type="GO" id="GO:0006777">
    <property type="term" value="P:Mo-molybdopterin cofactor biosynthetic process"/>
    <property type="evidence" value="ECO:0007669"/>
    <property type="project" value="UniProtKB-UniRule"/>
</dbReference>
<dbReference type="CDD" id="cd01419">
    <property type="entry name" value="MoaC_A"/>
    <property type="match status" value="1"/>
</dbReference>
<dbReference type="Gene3D" id="3.30.70.640">
    <property type="entry name" value="Molybdopterin cofactor biosynthesis C (MoaC) domain"/>
    <property type="match status" value="1"/>
</dbReference>
<dbReference type="HAMAP" id="MF_01224_A">
    <property type="entry name" value="MoaC_A"/>
    <property type="match status" value="1"/>
</dbReference>
<dbReference type="InterPro" id="IPR023047">
    <property type="entry name" value="Mo_CF_biosynth-C_arc"/>
</dbReference>
<dbReference type="InterPro" id="IPR023045">
    <property type="entry name" value="MoaC"/>
</dbReference>
<dbReference type="InterPro" id="IPR036522">
    <property type="entry name" value="MoaC_sf"/>
</dbReference>
<dbReference type="InterPro" id="IPR050105">
    <property type="entry name" value="MoCo_biosynth_MoaA/MoaC"/>
</dbReference>
<dbReference type="InterPro" id="IPR002820">
    <property type="entry name" value="Mopterin_CF_biosynth-C_dom"/>
</dbReference>
<dbReference type="NCBIfam" id="TIGR00581">
    <property type="entry name" value="moaC"/>
    <property type="match status" value="1"/>
</dbReference>
<dbReference type="NCBIfam" id="NF006870">
    <property type="entry name" value="PRK09364.1"/>
    <property type="match status" value="1"/>
</dbReference>
<dbReference type="NCBIfam" id="NF008999">
    <property type="entry name" value="PRK12343.1"/>
    <property type="match status" value="1"/>
</dbReference>
<dbReference type="PANTHER" id="PTHR22960">
    <property type="entry name" value="MOLYBDOPTERIN COFACTOR SYNTHESIS PROTEIN A"/>
    <property type="match status" value="1"/>
</dbReference>
<dbReference type="Pfam" id="PF01967">
    <property type="entry name" value="MoaC"/>
    <property type="match status" value="1"/>
</dbReference>
<dbReference type="SUPFAM" id="SSF55040">
    <property type="entry name" value="Molybdenum cofactor biosynthesis protein C, MoaC"/>
    <property type="match status" value="1"/>
</dbReference>
<gene>
    <name evidence="1" type="primary">moaC</name>
    <name type="ordered locus">Mbur_1878</name>
</gene>
<sequence>MQEFSHIKDDRAYMVDISNKDTVVRYATASGKIKLHDETVEKIRSGDVEKGNVLATARTAAILAVKRTPDLIPMCHQIPITSVDVEFEIGKSDVTANVEVKSVGRTGVEMEALTGVSVALLTIWDMVKSAEKDNTGNYPSTAIENIHVIRKVKETITNQ</sequence>
<protein>
    <recommendedName>
        <fullName evidence="1">Probable cyclic pyranopterin monophosphate synthase</fullName>
        <ecNumber evidence="1">4.6.1.17</ecNumber>
    </recommendedName>
    <alternativeName>
        <fullName evidence="1">Molybdenum cofactor biosynthesis protein C</fullName>
    </alternativeName>
</protein>
<comment type="function">
    <text evidence="1">Catalyzes the conversion of (8S)-3',8-cyclo-7,8-dihydroguanosine 5'-triphosphate to cyclic pyranopterin monophosphate (cPMP).</text>
</comment>
<comment type="catalytic activity">
    <reaction evidence="1">
        <text>(8S)-3',8-cyclo-7,8-dihydroguanosine 5'-triphosphate = cyclic pyranopterin phosphate + diphosphate</text>
        <dbReference type="Rhea" id="RHEA:49580"/>
        <dbReference type="ChEBI" id="CHEBI:33019"/>
        <dbReference type="ChEBI" id="CHEBI:59648"/>
        <dbReference type="ChEBI" id="CHEBI:131766"/>
        <dbReference type="EC" id="4.6.1.17"/>
    </reaction>
</comment>
<comment type="pathway">
    <text evidence="1">Cofactor biosynthesis; molybdopterin biosynthesis.</text>
</comment>
<comment type="subunit">
    <text evidence="1">Homohexamer; trimer of dimers.</text>
</comment>
<comment type="similarity">
    <text evidence="1">Belongs to the MoaC family.</text>
</comment>
<name>MOAC_METBU</name>
<proteinExistence type="inferred from homology"/>
<feature type="chain" id="PRO_1000054109" description="Probable cyclic pyranopterin monophosphate synthase">
    <location>
        <begin position="1"/>
        <end position="159"/>
    </location>
</feature>
<feature type="active site" evidence="1">
    <location>
        <position position="125"/>
    </location>
</feature>
<feature type="binding site" evidence="1">
    <location>
        <begin position="74"/>
        <end position="76"/>
    </location>
    <ligand>
        <name>substrate</name>
    </ligand>
</feature>
<feature type="binding site" evidence="1">
    <location>
        <begin position="110"/>
        <end position="111"/>
    </location>
    <ligand>
        <name>substrate</name>
    </ligand>
</feature>